<name>RF1_EXIS2</name>
<evidence type="ECO:0000255" key="1">
    <source>
        <dbReference type="HAMAP-Rule" id="MF_00093"/>
    </source>
</evidence>
<reference key="1">
    <citation type="submission" date="2008-04" db="EMBL/GenBank/DDBJ databases">
        <title>Complete sequence of chromosome of Exiguobacterium sibiricum 255-15.</title>
        <authorList>
            <consortium name="US DOE Joint Genome Institute"/>
            <person name="Copeland A."/>
            <person name="Lucas S."/>
            <person name="Lapidus A."/>
            <person name="Glavina del Rio T."/>
            <person name="Dalin E."/>
            <person name="Tice H."/>
            <person name="Bruce D."/>
            <person name="Goodwin L."/>
            <person name="Pitluck S."/>
            <person name="Kiss H."/>
            <person name="Chertkov O."/>
            <person name="Monk C."/>
            <person name="Brettin T."/>
            <person name="Detter J.C."/>
            <person name="Han C."/>
            <person name="Kuske C.R."/>
            <person name="Schmutz J."/>
            <person name="Larimer F."/>
            <person name="Land M."/>
            <person name="Hauser L."/>
            <person name="Kyrpides N."/>
            <person name="Mikhailova N."/>
            <person name="Vishnivetskaya T."/>
            <person name="Rodrigues D.F."/>
            <person name="Gilichinsky D."/>
            <person name="Tiedje J."/>
            <person name="Richardson P."/>
        </authorList>
    </citation>
    <scope>NUCLEOTIDE SEQUENCE [LARGE SCALE GENOMIC DNA]</scope>
    <source>
        <strain>DSM 17290 / CCUG 55495 / CIP 109462 / JCM 13490 / 255-15</strain>
    </source>
</reference>
<comment type="function">
    <text evidence="1">Peptide chain release factor 1 directs the termination of translation in response to the peptide chain termination codons UAG and UAA.</text>
</comment>
<comment type="subcellular location">
    <subcellularLocation>
        <location evidence="1">Cytoplasm</location>
    </subcellularLocation>
</comment>
<comment type="PTM">
    <text evidence="1">Methylated by PrmC. Methylation increases the termination efficiency of RF1.</text>
</comment>
<comment type="similarity">
    <text evidence="1">Belongs to the prokaryotic/mitochondrial release factor family.</text>
</comment>
<sequence>MLDRLSALEDRYEKLNDLLADPAIIKDTNQLREVSKEQSQLAPTVEVYRVYRDKMEAYQEARHMLTDPEMRDLAKEEVAVLEPEIKDLETKLKALLLPKDPNDDKNVIVEIRGAAGGDEAALFAGDLFKMYSKFAEKQNWKIEIIDASYTELGGYKEIIFIVKGSGAYSKLKYENGAHRVQRVPSTESGGRIHTSTATVAVLPEAEDVEVEIHDKDVRVDTFTSSGPGGQSVNTTQSAVRVTHVPTGIVASCQDEKSQIKNKEKAMKVLRARVYDKIQREQQAEYDEKRKSAVGTGDRSERIRTYNFAQNRVTDHRIGLTIQKLDRILQGEMDEVIDTLVMEYQARASEAAN</sequence>
<keyword id="KW-0963">Cytoplasm</keyword>
<keyword id="KW-0488">Methylation</keyword>
<keyword id="KW-0648">Protein biosynthesis</keyword>
<keyword id="KW-1185">Reference proteome</keyword>
<dbReference type="EMBL" id="CP001022">
    <property type="protein sequence ID" value="ACB62147.1"/>
    <property type="molecule type" value="Genomic_DNA"/>
</dbReference>
<dbReference type="RefSeq" id="WP_012371563.1">
    <property type="nucleotide sequence ID" value="NC_010556.1"/>
</dbReference>
<dbReference type="SMR" id="B1YEH9"/>
<dbReference type="STRING" id="262543.Exig_2699"/>
<dbReference type="KEGG" id="esi:Exig_2699"/>
<dbReference type="eggNOG" id="COG0216">
    <property type="taxonomic scope" value="Bacteria"/>
</dbReference>
<dbReference type="HOGENOM" id="CLU_036856_0_1_9"/>
<dbReference type="OrthoDB" id="9806673at2"/>
<dbReference type="Proteomes" id="UP000001681">
    <property type="component" value="Chromosome"/>
</dbReference>
<dbReference type="GO" id="GO:0005737">
    <property type="term" value="C:cytoplasm"/>
    <property type="evidence" value="ECO:0007669"/>
    <property type="project" value="UniProtKB-SubCell"/>
</dbReference>
<dbReference type="GO" id="GO:0016149">
    <property type="term" value="F:translation release factor activity, codon specific"/>
    <property type="evidence" value="ECO:0007669"/>
    <property type="project" value="UniProtKB-UniRule"/>
</dbReference>
<dbReference type="FunFam" id="3.30.160.20:FF:000004">
    <property type="entry name" value="Peptide chain release factor 1"/>
    <property type="match status" value="1"/>
</dbReference>
<dbReference type="FunFam" id="3.30.70.1660:FF:000002">
    <property type="entry name" value="Peptide chain release factor 1"/>
    <property type="match status" value="1"/>
</dbReference>
<dbReference type="FunFam" id="3.30.70.1660:FF:000004">
    <property type="entry name" value="Peptide chain release factor 1"/>
    <property type="match status" value="1"/>
</dbReference>
<dbReference type="Gene3D" id="3.30.160.20">
    <property type="match status" value="1"/>
</dbReference>
<dbReference type="Gene3D" id="3.30.70.1660">
    <property type="match status" value="1"/>
</dbReference>
<dbReference type="Gene3D" id="6.10.140.1950">
    <property type="match status" value="1"/>
</dbReference>
<dbReference type="HAMAP" id="MF_00093">
    <property type="entry name" value="Rel_fac_1"/>
    <property type="match status" value="1"/>
</dbReference>
<dbReference type="InterPro" id="IPR005139">
    <property type="entry name" value="PCRF"/>
</dbReference>
<dbReference type="InterPro" id="IPR000352">
    <property type="entry name" value="Pep_chain_release_fac_I"/>
</dbReference>
<dbReference type="InterPro" id="IPR045853">
    <property type="entry name" value="Pep_chain_release_fac_I_sf"/>
</dbReference>
<dbReference type="InterPro" id="IPR050057">
    <property type="entry name" value="Prokaryotic/Mito_RF"/>
</dbReference>
<dbReference type="InterPro" id="IPR004373">
    <property type="entry name" value="RF-1"/>
</dbReference>
<dbReference type="NCBIfam" id="TIGR00019">
    <property type="entry name" value="prfA"/>
    <property type="match status" value="1"/>
</dbReference>
<dbReference type="NCBIfam" id="NF001859">
    <property type="entry name" value="PRK00591.1"/>
    <property type="match status" value="1"/>
</dbReference>
<dbReference type="PANTHER" id="PTHR43804">
    <property type="entry name" value="LD18447P"/>
    <property type="match status" value="1"/>
</dbReference>
<dbReference type="PANTHER" id="PTHR43804:SF7">
    <property type="entry name" value="LD18447P"/>
    <property type="match status" value="1"/>
</dbReference>
<dbReference type="Pfam" id="PF03462">
    <property type="entry name" value="PCRF"/>
    <property type="match status" value="1"/>
</dbReference>
<dbReference type="Pfam" id="PF00472">
    <property type="entry name" value="RF-1"/>
    <property type="match status" value="1"/>
</dbReference>
<dbReference type="SMART" id="SM00937">
    <property type="entry name" value="PCRF"/>
    <property type="match status" value="1"/>
</dbReference>
<dbReference type="SUPFAM" id="SSF75620">
    <property type="entry name" value="Release factor"/>
    <property type="match status" value="1"/>
</dbReference>
<gene>
    <name evidence="1" type="primary">prfA</name>
    <name type="ordered locus">Exig_2699</name>
</gene>
<protein>
    <recommendedName>
        <fullName evidence="1">Peptide chain release factor 1</fullName>
        <shortName evidence="1">RF-1</shortName>
    </recommendedName>
</protein>
<feature type="chain" id="PRO_1000093455" description="Peptide chain release factor 1">
    <location>
        <begin position="1"/>
        <end position="352"/>
    </location>
</feature>
<feature type="modified residue" description="N5-methylglutamine" evidence="1">
    <location>
        <position position="230"/>
    </location>
</feature>
<organism>
    <name type="scientific">Exiguobacterium sibiricum (strain DSM 17290 / CCUG 55495 / CIP 109462 / JCM 13490 / 255-15)</name>
    <dbReference type="NCBI Taxonomy" id="262543"/>
    <lineage>
        <taxon>Bacteria</taxon>
        <taxon>Bacillati</taxon>
        <taxon>Bacillota</taxon>
        <taxon>Bacilli</taxon>
        <taxon>Bacillales</taxon>
        <taxon>Bacillales Family XII. Incertae Sedis</taxon>
        <taxon>Exiguobacterium</taxon>
    </lineage>
</organism>
<accession>B1YEH9</accession>
<proteinExistence type="inferred from homology"/>